<accession>Q5AFX2</accession>
<accession>A0A1D8PLN5</accession>
<accession>Q5AF86</accession>
<dbReference type="EMBL" id="CP017626">
    <property type="protein sequence ID" value="AOW29044.1"/>
    <property type="molecule type" value="Genomic_DNA"/>
</dbReference>
<dbReference type="RefSeq" id="XP_720471.2">
    <property type="nucleotide sequence ID" value="XM_715378.2"/>
</dbReference>
<dbReference type="SMR" id="Q5AFX2"/>
<dbReference type="FunCoup" id="Q5AFX2">
    <property type="interactions" value="785"/>
</dbReference>
<dbReference type="STRING" id="237561.Q5AFX2"/>
<dbReference type="EnsemblFungi" id="C4_02770C_A-T">
    <property type="protein sequence ID" value="C4_02770C_A-T-p1"/>
    <property type="gene ID" value="C4_02770C_A"/>
</dbReference>
<dbReference type="GeneID" id="3637903"/>
<dbReference type="KEGG" id="cal:CAALFM_C402770CA"/>
<dbReference type="CGD" id="CAL0000179097">
    <property type="gene designation" value="orf19.10236"/>
</dbReference>
<dbReference type="VEuPathDB" id="FungiDB:C4_02770C_A"/>
<dbReference type="eggNOG" id="KOG2983">
    <property type="taxonomic scope" value="Eukaryota"/>
</dbReference>
<dbReference type="HOGENOM" id="CLU_034402_2_0_1"/>
<dbReference type="InParanoid" id="Q5AFX2"/>
<dbReference type="OrthoDB" id="360540at2759"/>
<dbReference type="PRO" id="PR:Q5AFX2"/>
<dbReference type="Proteomes" id="UP000000559">
    <property type="component" value="Chromosome 4"/>
</dbReference>
<dbReference type="GO" id="GO:0005737">
    <property type="term" value="C:cytoplasm"/>
    <property type="evidence" value="ECO:0000250"/>
    <property type="project" value="UniProtKB"/>
</dbReference>
<dbReference type="GO" id="GO:0005524">
    <property type="term" value="F:ATP binding"/>
    <property type="evidence" value="ECO:0000250"/>
    <property type="project" value="UniProtKB"/>
</dbReference>
<dbReference type="GO" id="GO:0000287">
    <property type="term" value="F:magnesium ion binding"/>
    <property type="evidence" value="ECO:0000250"/>
    <property type="project" value="UniProtKB"/>
</dbReference>
<dbReference type="GO" id="GO:0044183">
    <property type="term" value="F:protein folding chaperone"/>
    <property type="evidence" value="ECO:0000250"/>
    <property type="project" value="UniProtKB"/>
</dbReference>
<dbReference type="GO" id="GO:1905143">
    <property type="term" value="P:eukaryotic translation initiation factor 2 complex assembly"/>
    <property type="evidence" value="ECO:0000250"/>
    <property type="project" value="UniProtKB"/>
</dbReference>
<dbReference type="InterPro" id="IPR009772">
    <property type="entry name" value="CDC123"/>
</dbReference>
<dbReference type="PANTHER" id="PTHR15323:SF6">
    <property type="entry name" value="CELL DIVISION CYCLE PROTEIN 123 HOMOLOG"/>
    <property type="match status" value="1"/>
</dbReference>
<dbReference type="PANTHER" id="PTHR15323">
    <property type="entry name" value="D123 PROTEIN"/>
    <property type="match status" value="1"/>
</dbReference>
<dbReference type="Pfam" id="PF07065">
    <property type="entry name" value="D123"/>
    <property type="match status" value="1"/>
</dbReference>
<dbReference type="PIRSF" id="PIRSF007807">
    <property type="entry name" value="Cdc123"/>
    <property type="match status" value="1"/>
</dbReference>
<proteinExistence type="inferred from homology"/>
<feature type="chain" id="PRO_0000350941" description="Translation initiation factor eIF2 assembly protein">
    <location>
        <begin position="1"/>
        <end position="345"/>
    </location>
</feature>
<feature type="binding site" evidence="1">
    <location>
        <position position="123"/>
    </location>
    <ligand>
        <name>ATP</name>
        <dbReference type="ChEBI" id="CHEBI:30616"/>
    </ligand>
</feature>
<feature type="binding site" evidence="1">
    <location>
        <position position="126"/>
    </location>
    <ligand>
        <name>ATP</name>
        <dbReference type="ChEBI" id="CHEBI:30616"/>
    </ligand>
</feature>
<feature type="binding site" evidence="3">
    <location>
        <position position="128"/>
    </location>
    <ligand>
        <name>ATP</name>
        <dbReference type="ChEBI" id="CHEBI:30616"/>
    </ligand>
</feature>
<feature type="binding site" evidence="3">
    <location>
        <position position="130"/>
    </location>
    <ligand>
        <name>ATP</name>
        <dbReference type="ChEBI" id="CHEBI:30616"/>
    </ligand>
</feature>
<feature type="binding site" evidence="1">
    <location>
        <position position="188"/>
    </location>
    <ligand>
        <name>ATP</name>
        <dbReference type="ChEBI" id="CHEBI:30616"/>
    </ligand>
</feature>
<feature type="binding site" evidence="3">
    <location>
        <position position="189"/>
    </location>
    <ligand>
        <name>ATP</name>
        <dbReference type="ChEBI" id="CHEBI:30616"/>
    </ligand>
</feature>
<feature type="binding site" evidence="1">
    <location>
        <position position="197"/>
    </location>
    <ligand>
        <name>ATP</name>
        <dbReference type="ChEBI" id="CHEBI:30616"/>
    </ligand>
</feature>
<feature type="binding site" evidence="1">
    <location>
        <position position="199"/>
    </location>
    <ligand>
        <name>ATP</name>
        <dbReference type="ChEBI" id="CHEBI:30616"/>
    </ligand>
</feature>
<feature type="binding site" evidence="1">
    <location>
        <position position="213"/>
    </location>
    <ligand>
        <name>ATP</name>
        <dbReference type="ChEBI" id="CHEBI:30616"/>
    </ligand>
</feature>
<feature type="binding site" evidence="3">
    <location>
        <position position="256"/>
    </location>
    <ligand>
        <name>ATP</name>
        <dbReference type="ChEBI" id="CHEBI:30616"/>
    </ligand>
</feature>
<feature type="binding site" evidence="1">
    <location>
        <position position="268"/>
    </location>
    <ligand>
        <name>ATP</name>
        <dbReference type="ChEBI" id="CHEBI:30616"/>
    </ligand>
</feature>
<feature type="binding site" evidence="1">
    <location>
        <position position="268"/>
    </location>
    <ligand>
        <name>Mg(2+)</name>
        <dbReference type="ChEBI" id="CHEBI:18420"/>
    </ligand>
</feature>
<feature type="binding site" evidence="1">
    <location>
        <position position="270"/>
    </location>
    <ligand>
        <name>ATP</name>
        <dbReference type="ChEBI" id="CHEBI:30616"/>
    </ligand>
</feature>
<feature type="binding site" evidence="1">
    <location>
        <position position="270"/>
    </location>
    <ligand>
        <name>Mg(2+)</name>
        <dbReference type="ChEBI" id="CHEBI:18420"/>
    </ligand>
</feature>
<keyword id="KW-0067">ATP-binding</keyword>
<keyword id="KW-0143">Chaperone</keyword>
<keyword id="KW-0963">Cytoplasm</keyword>
<keyword id="KW-0460">Magnesium</keyword>
<keyword id="KW-0479">Metal-binding</keyword>
<keyword id="KW-0547">Nucleotide-binding</keyword>
<keyword id="KW-1185">Reference proteome</keyword>
<comment type="function">
    <text evidence="2">ATP-dependent protein-folding chaperone for the eIF2 complex. Binds to the gamma subunit of the eIF2 complex which allows the subunit to assemble with the alpha and beta subunits.</text>
</comment>
<comment type="subcellular location">
    <subcellularLocation>
        <location evidence="2">Cytoplasm</location>
    </subcellularLocation>
</comment>
<comment type="similarity">
    <text evidence="4">Belongs to the CDC123 family.</text>
</comment>
<organism>
    <name type="scientific">Candida albicans (strain SC5314 / ATCC MYA-2876)</name>
    <name type="common">Yeast</name>
    <dbReference type="NCBI Taxonomy" id="237561"/>
    <lineage>
        <taxon>Eukaryota</taxon>
        <taxon>Fungi</taxon>
        <taxon>Dikarya</taxon>
        <taxon>Ascomycota</taxon>
        <taxon>Saccharomycotina</taxon>
        <taxon>Pichiomycetes</taxon>
        <taxon>Debaryomycetaceae</taxon>
        <taxon>Candida/Lodderomyces clade</taxon>
        <taxon>Candida</taxon>
    </lineage>
</organism>
<protein>
    <recommendedName>
        <fullName evidence="4">Translation initiation factor eIF2 assembly protein</fullName>
    </recommendedName>
    <alternativeName>
        <fullName>Cell division cycle protein 123</fullName>
    </alternativeName>
</protein>
<reference key="1">
    <citation type="journal article" date="2004" name="Proc. Natl. Acad. Sci. U.S.A.">
        <title>The diploid genome sequence of Candida albicans.</title>
        <authorList>
            <person name="Jones T."/>
            <person name="Federspiel N.A."/>
            <person name="Chibana H."/>
            <person name="Dungan J."/>
            <person name="Kalman S."/>
            <person name="Magee B.B."/>
            <person name="Newport G."/>
            <person name="Thorstenson Y.R."/>
            <person name="Agabian N."/>
            <person name="Magee P.T."/>
            <person name="Davis R.W."/>
            <person name="Scherer S."/>
        </authorList>
    </citation>
    <scope>NUCLEOTIDE SEQUENCE [LARGE SCALE GENOMIC DNA]</scope>
    <source>
        <strain>SC5314 / ATCC MYA-2876</strain>
    </source>
</reference>
<reference key="2">
    <citation type="journal article" date="2007" name="Genome Biol.">
        <title>Assembly of the Candida albicans genome into sixteen supercontigs aligned on the eight chromosomes.</title>
        <authorList>
            <person name="van het Hoog M."/>
            <person name="Rast T.J."/>
            <person name="Martchenko M."/>
            <person name="Grindle S."/>
            <person name="Dignard D."/>
            <person name="Hogues H."/>
            <person name="Cuomo C."/>
            <person name="Berriman M."/>
            <person name="Scherer S."/>
            <person name="Magee B.B."/>
            <person name="Whiteway M."/>
            <person name="Chibana H."/>
            <person name="Nantel A."/>
            <person name="Magee P.T."/>
        </authorList>
    </citation>
    <scope>GENOME REANNOTATION</scope>
    <source>
        <strain>SC5314 / ATCC MYA-2876</strain>
    </source>
</reference>
<reference key="3">
    <citation type="journal article" date="2013" name="Genome Biol.">
        <title>Assembly of a phased diploid Candida albicans genome facilitates allele-specific measurements and provides a simple model for repeat and indel structure.</title>
        <authorList>
            <person name="Muzzey D."/>
            <person name="Schwartz K."/>
            <person name="Weissman J.S."/>
            <person name="Sherlock G."/>
        </authorList>
    </citation>
    <scope>NUCLEOTIDE SEQUENCE [LARGE SCALE GENOMIC DNA]</scope>
    <scope>GENOME REANNOTATION</scope>
    <source>
        <strain>SC5314 / ATCC MYA-2876</strain>
    </source>
</reference>
<name>CD123_CANAL</name>
<sequence length="345" mass="40106">MTERDYTTFETIDLTSEEVLQCSYSNWSKLFPGKTFPSKIIKPLPSTFLDYLASESIRLPSNTNNKKITVLEADSDNEYSDWDDEEDQQQDAEHNDNVFSQFQDIQDKIDASIQEMGGAVFTKLNWSSPKDAKWIMPGNTIKCQNVSDVYLLLNSSDHIGDDLDNPFSEVQKKKTIPEKVDYELVLTKWQEINPAYEFRVFVKDHRIIGISQRDNNKYEFLQGLKSELNEKITQFVEDHVIPKLKSDTQLSKYIVDVYVSKNDIYIIDINPFSRKSDSCLFTWVELLDKKDKHDNHHELRLVENQNFAKEFSESQVPIEVVGATMDTEAMVELAREWDKLQAKEK</sequence>
<evidence type="ECO:0000250" key="1">
    <source>
        <dbReference type="UniProtKB" id="O75794"/>
    </source>
</evidence>
<evidence type="ECO:0000250" key="2">
    <source>
        <dbReference type="UniProtKB" id="Q05791"/>
    </source>
</evidence>
<evidence type="ECO:0000250" key="3">
    <source>
        <dbReference type="UniProtKB" id="Q9P7N5"/>
    </source>
</evidence>
<evidence type="ECO:0000305" key="4"/>
<gene>
    <name type="primary">CDC123</name>
    <name type="ordered locus">CAALFM_C402770CA</name>
    <name type="ORF">CaO19.10236</name>
    <name type="ORF">CaO19.2721</name>
</gene>